<dbReference type="EC" id="6.1.1.20" evidence="1"/>
<dbReference type="EMBL" id="AE006470">
    <property type="protein sequence ID" value="AAM71967.1"/>
    <property type="molecule type" value="Genomic_DNA"/>
</dbReference>
<dbReference type="RefSeq" id="NP_661625.1">
    <property type="nucleotide sequence ID" value="NC_002932.3"/>
</dbReference>
<dbReference type="RefSeq" id="WP_010932412.1">
    <property type="nucleotide sequence ID" value="NC_002932.3"/>
</dbReference>
<dbReference type="SMR" id="Q8KEF9"/>
<dbReference type="STRING" id="194439.CT0730"/>
<dbReference type="EnsemblBacteria" id="AAM71967">
    <property type="protein sequence ID" value="AAM71967"/>
    <property type="gene ID" value="CT0730"/>
</dbReference>
<dbReference type="KEGG" id="cte:CT0730"/>
<dbReference type="PATRIC" id="fig|194439.7.peg.668"/>
<dbReference type="eggNOG" id="COG0072">
    <property type="taxonomic scope" value="Bacteria"/>
</dbReference>
<dbReference type="eggNOG" id="COG0073">
    <property type="taxonomic scope" value="Bacteria"/>
</dbReference>
<dbReference type="HOGENOM" id="CLU_016891_0_0_10"/>
<dbReference type="OrthoDB" id="9805455at2"/>
<dbReference type="Proteomes" id="UP000001007">
    <property type="component" value="Chromosome"/>
</dbReference>
<dbReference type="GO" id="GO:0009328">
    <property type="term" value="C:phenylalanine-tRNA ligase complex"/>
    <property type="evidence" value="ECO:0007669"/>
    <property type="project" value="TreeGrafter"/>
</dbReference>
<dbReference type="GO" id="GO:0005524">
    <property type="term" value="F:ATP binding"/>
    <property type="evidence" value="ECO:0007669"/>
    <property type="project" value="UniProtKB-UniRule"/>
</dbReference>
<dbReference type="GO" id="GO:0000287">
    <property type="term" value="F:magnesium ion binding"/>
    <property type="evidence" value="ECO:0007669"/>
    <property type="project" value="UniProtKB-UniRule"/>
</dbReference>
<dbReference type="GO" id="GO:0004826">
    <property type="term" value="F:phenylalanine-tRNA ligase activity"/>
    <property type="evidence" value="ECO:0007669"/>
    <property type="project" value="UniProtKB-UniRule"/>
</dbReference>
<dbReference type="GO" id="GO:0000049">
    <property type="term" value="F:tRNA binding"/>
    <property type="evidence" value="ECO:0007669"/>
    <property type="project" value="UniProtKB-KW"/>
</dbReference>
<dbReference type="GO" id="GO:0006432">
    <property type="term" value="P:phenylalanyl-tRNA aminoacylation"/>
    <property type="evidence" value="ECO:0007669"/>
    <property type="project" value="UniProtKB-UniRule"/>
</dbReference>
<dbReference type="CDD" id="cd00769">
    <property type="entry name" value="PheRS_beta_core"/>
    <property type="match status" value="1"/>
</dbReference>
<dbReference type="CDD" id="cd02796">
    <property type="entry name" value="tRNA_bind_bactPheRS"/>
    <property type="match status" value="1"/>
</dbReference>
<dbReference type="FunFam" id="2.40.50.140:FF:000045">
    <property type="entry name" value="Phenylalanine--tRNA ligase beta subunit"/>
    <property type="match status" value="1"/>
</dbReference>
<dbReference type="Gene3D" id="3.30.56.10">
    <property type="match status" value="2"/>
</dbReference>
<dbReference type="Gene3D" id="3.30.930.10">
    <property type="entry name" value="Bira Bifunctional Protein, Domain 2"/>
    <property type="match status" value="1"/>
</dbReference>
<dbReference type="Gene3D" id="3.30.70.380">
    <property type="entry name" value="Ferrodoxin-fold anticodon-binding domain"/>
    <property type="match status" value="1"/>
</dbReference>
<dbReference type="Gene3D" id="2.40.50.140">
    <property type="entry name" value="Nucleic acid-binding proteins"/>
    <property type="match status" value="1"/>
</dbReference>
<dbReference type="Gene3D" id="3.50.40.10">
    <property type="entry name" value="Phenylalanyl-trna Synthetase, Chain B, domain 3"/>
    <property type="match status" value="1"/>
</dbReference>
<dbReference type="HAMAP" id="MF_00283">
    <property type="entry name" value="Phe_tRNA_synth_beta1"/>
    <property type="match status" value="1"/>
</dbReference>
<dbReference type="InterPro" id="IPR045864">
    <property type="entry name" value="aa-tRNA-synth_II/BPL/LPL"/>
</dbReference>
<dbReference type="InterPro" id="IPR005146">
    <property type="entry name" value="B3/B4_tRNA-bd"/>
</dbReference>
<dbReference type="InterPro" id="IPR009061">
    <property type="entry name" value="DNA-bd_dom_put_sf"/>
</dbReference>
<dbReference type="InterPro" id="IPR005121">
    <property type="entry name" value="Fdx_antiC-bd"/>
</dbReference>
<dbReference type="InterPro" id="IPR036690">
    <property type="entry name" value="Fdx_antiC-bd_sf"/>
</dbReference>
<dbReference type="InterPro" id="IPR012340">
    <property type="entry name" value="NA-bd_OB-fold"/>
</dbReference>
<dbReference type="InterPro" id="IPR045060">
    <property type="entry name" value="Phe-tRNA-ligase_IIc_bsu"/>
</dbReference>
<dbReference type="InterPro" id="IPR004532">
    <property type="entry name" value="Phe-tRNA-ligase_IIc_bsu_bact"/>
</dbReference>
<dbReference type="InterPro" id="IPR020825">
    <property type="entry name" value="Phe-tRNA_synthase-like_B3/B4"/>
</dbReference>
<dbReference type="InterPro" id="IPR041616">
    <property type="entry name" value="PheRS_beta_core"/>
</dbReference>
<dbReference type="InterPro" id="IPR002547">
    <property type="entry name" value="tRNA-bd_dom"/>
</dbReference>
<dbReference type="InterPro" id="IPR033714">
    <property type="entry name" value="tRNA_bind_bactPheRS"/>
</dbReference>
<dbReference type="InterPro" id="IPR005147">
    <property type="entry name" value="tRNA_synthase_B5-dom"/>
</dbReference>
<dbReference type="NCBIfam" id="TIGR00472">
    <property type="entry name" value="pheT_bact"/>
    <property type="match status" value="1"/>
</dbReference>
<dbReference type="NCBIfam" id="NF045760">
    <property type="entry name" value="YtpR"/>
    <property type="match status" value="1"/>
</dbReference>
<dbReference type="PANTHER" id="PTHR10947:SF0">
    <property type="entry name" value="PHENYLALANINE--TRNA LIGASE BETA SUBUNIT"/>
    <property type="match status" value="1"/>
</dbReference>
<dbReference type="PANTHER" id="PTHR10947">
    <property type="entry name" value="PHENYLALANYL-TRNA SYNTHETASE BETA CHAIN AND LEUCINE-RICH REPEAT-CONTAINING PROTEIN 47"/>
    <property type="match status" value="1"/>
</dbReference>
<dbReference type="Pfam" id="PF03483">
    <property type="entry name" value="B3_4"/>
    <property type="match status" value="1"/>
</dbReference>
<dbReference type="Pfam" id="PF03484">
    <property type="entry name" value="B5"/>
    <property type="match status" value="1"/>
</dbReference>
<dbReference type="Pfam" id="PF03147">
    <property type="entry name" value="FDX-ACB"/>
    <property type="match status" value="1"/>
</dbReference>
<dbReference type="Pfam" id="PF01588">
    <property type="entry name" value="tRNA_bind"/>
    <property type="match status" value="1"/>
</dbReference>
<dbReference type="Pfam" id="PF17759">
    <property type="entry name" value="tRNA_synthFbeta"/>
    <property type="match status" value="1"/>
</dbReference>
<dbReference type="SMART" id="SM00873">
    <property type="entry name" value="B3_4"/>
    <property type="match status" value="1"/>
</dbReference>
<dbReference type="SMART" id="SM00874">
    <property type="entry name" value="B5"/>
    <property type="match status" value="1"/>
</dbReference>
<dbReference type="SMART" id="SM00896">
    <property type="entry name" value="FDX-ACB"/>
    <property type="match status" value="1"/>
</dbReference>
<dbReference type="SUPFAM" id="SSF54991">
    <property type="entry name" value="Anticodon-binding domain of PheRS"/>
    <property type="match status" value="1"/>
</dbReference>
<dbReference type="SUPFAM" id="SSF55681">
    <property type="entry name" value="Class II aaRS and biotin synthetases"/>
    <property type="match status" value="1"/>
</dbReference>
<dbReference type="SUPFAM" id="SSF50249">
    <property type="entry name" value="Nucleic acid-binding proteins"/>
    <property type="match status" value="1"/>
</dbReference>
<dbReference type="SUPFAM" id="SSF56037">
    <property type="entry name" value="PheT/TilS domain"/>
    <property type="match status" value="1"/>
</dbReference>
<dbReference type="SUPFAM" id="SSF46955">
    <property type="entry name" value="Putative DNA-binding domain"/>
    <property type="match status" value="1"/>
</dbReference>
<dbReference type="PROSITE" id="PS51483">
    <property type="entry name" value="B5"/>
    <property type="match status" value="1"/>
</dbReference>
<dbReference type="PROSITE" id="PS51447">
    <property type="entry name" value="FDX_ACB"/>
    <property type="match status" value="1"/>
</dbReference>
<dbReference type="PROSITE" id="PS50886">
    <property type="entry name" value="TRBD"/>
    <property type="match status" value="1"/>
</dbReference>
<protein>
    <recommendedName>
        <fullName evidence="1">Phenylalanine--tRNA ligase beta subunit</fullName>
        <ecNumber evidence="1">6.1.1.20</ecNumber>
    </recommendedName>
    <alternativeName>
        <fullName evidence="1">Phenylalanyl-tRNA synthetase beta subunit</fullName>
        <shortName evidence="1">PheRS</shortName>
    </alternativeName>
</protein>
<feature type="chain" id="PRO_0000126867" description="Phenylalanine--tRNA ligase beta subunit">
    <location>
        <begin position="1"/>
        <end position="810"/>
    </location>
</feature>
<feature type="domain" description="tRNA-binding" evidence="1">
    <location>
        <begin position="40"/>
        <end position="153"/>
    </location>
</feature>
<feature type="domain" description="B5" evidence="1">
    <location>
        <begin position="399"/>
        <end position="480"/>
    </location>
</feature>
<feature type="domain" description="FDX-ACB" evidence="1">
    <location>
        <begin position="714"/>
        <end position="808"/>
    </location>
</feature>
<feature type="binding site" evidence="1">
    <location>
        <position position="458"/>
    </location>
    <ligand>
        <name>Mg(2+)</name>
        <dbReference type="ChEBI" id="CHEBI:18420"/>
        <note>shared with alpha subunit</note>
    </ligand>
</feature>
<feature type="binding site" evidence="1">
    <location>
        <position position="464"/>
    </location>
    <ligand>
        <name>Mg(2+)</name>
        <dbReference type="ChEBI" id="CHEBI:18420"/>
        <note>shared with alpha subunit</note>
    </ligand>
</feature>
<feature type="binding site" evidence="1">
    <location>
        <position position="467"/>
    </location>
    <ligand>
        <name>Mg(2+)</name>
        <dbReference type="ChEBI" id="CHEBI:18420"/>
        <note>shared with alpha subunit</note>
    </ligand>
</feature>
<feature type="binding site" evidence="1">
    <location>
        <position position="468"/>
    </location>
    <ligand>
        <name>Mg(2+)</name>
        <dbReference type="ChEBI" id="CHEBI:18420"/>
        <note>shared with alpha subunit</note>
    </ligand>
</feature>
<accession>Q8KEF9</accession>
<proteinExistence type="inferred from homology"/>
<evidence type="ECO:0000255" key="1">
    <source>
        <dbReference type="HAMAP-Rule" id="MF_00283"/>
    </source>
</evidence>
<organism>
    <name type="scientific">Chlorobaculum tepidum (strain ATCC 49652 / DSM 12025 / NBRC 103806 / TLS)</name>
    <name type="common">Chlorobium tepidum</name>
    <dbReference type="NCBI Taxonomy" id="194439"/>
    <lineage>
        <taxon>Bacteria</taxon>
        <taxon>Pseudomonadati</taxon>
        <taxon>Chlorobiota</taxon>
        <taxon>Chlorobiia</taxon>
        <taxon>Chlorobiales</taxon>
        <taxon>Chlorobiaceae</taxon>
        <taxon>Chlorobaculum</taxon>
    </lineage>
</organism>
<reference key="1">
    <citation type="journal article" date="2002" name="Proc. Natl. Acad. Sci. U.S.A.">
        <title>The complete genome sequence of Chlorobium tepidum TLS, a photosynthetic, anaerobic, green-sulfur bacterium.</title>
        <authorList>
            <person name="Eisen J.A."/>
            <person name="Nelson K.E."/>
            <person name="Paulsen I.T."/>
            <person name="Heidelberg J.F."/>
            <person name="Wu M."/>
            <person name="Dodson R.J."/>
            <person name="DeBoy R.T."/>
            <person name="Gwinn M.L."/>
            <person name="Nelson W.C."/>
            <person name="Haft D.H."/>
            <person name="Hickey E.K."/>
            <person name="Peterson J.D."/>
            <person name="Durkin A.S."/>
            <person name="Kolonay J.F."/>
            <person name="Yang F."/>
            <person name="Holt I.E."/>
            <person name="Umayam L.A."/>
            <person name="Mason T.M."/>
            <person name="Brenner M."/>
            <person name="Shea T.P."/>
            <person name="Parksey D.S."/>
            <person name="Nierman W.C."/>
            <person name="Feldblyum T.V."/>
            <person name="Hansen C.L."/>
            <person name="Craven M.B."/>
            <person name="Radune D."/>
            <person name="Vamathevan J.J."/>
            <person name="Khouri H.M."/>
            <person name="White O."/>
            <person name="Gruber T.M."/>
            <person name="Ketchum K.A."/>
            <person name="Venter J.C."/>
            <person name="Tettelin H."/>
            <person name="Bryant D.A."/>
            <person name="Fraser C.M."/>
        </authorList>
    </citation>
    <scope>NUCLEOTIDE SEQUENCE [LARGE SCALE GENOMIC DNA]</scope>
    <source>
        <strain>ATCC 49652 / DSM 12025 / NBRC 103806 / TLS</strain>
    </source>
</reference>
<comment type="catalytic activity">
    <reaction evidence="1">
        <text>tRNA(Phe) + L-phenylalanine + ATP = L-phenylalanyl-tRNA(Phe) + AMP + diphosphate + H(+)</text>
        <dbReference type="Rhea" id="RHEA:19413"/>
        <dbReference type="Rhea" id="RHEA-COMP:9668"/>
        <dbReference type="Rhea" id="RHEA-COMP:9699"/>
        <dbReference type="ChEBI" id="CHEBI:15378"/>
        <dbReference type="ChEBI" id="CHEBI:30616"/>
        <dbReference type="ChEBI" id="CHEBI:33019"/>
        <dbReference type="ChEBI" id="CHEBI:58095"/>
        <dbReference type="ChEBI" id="CHEBI:78442"/>
        <dbReference type="ChEBI" id="CHEBI:78531"/>
        <dbReference type="ChEBI" id="CHEBI:456215"/>
        <dbReference type="EC" id="6.1.1.20"/>
    </reaction>
</comment>
<comment type="cofactor">
    <cofactor evidence="1">
        <name>Mg(2+)</name>
        <dbReference type="ChEBI" id="CHEBI:18420"/>
    </cofactor>
    <text evidence="1">Binds 2 magnesium ions per tetramer.</text>
</comment>
<comment type="subunit">
    <text evidence="1">Tetramer of two alpha and two beta subunits.</text>
</comment>
<comment type="subcellular location">
    <subcellularLocation>
        <location evidence="1">Cytoplasm</location>
    </subcellularLocation>
</comment>
<comment type="similarity">
    <text evidence="1">Belongs to the phenylalanyl-tRNA synthetase beta subunit family. Type 1 subfamily.</text>
</comment>
<name>SYFB_CHLTE</name>
<sequence>MKISVNWLKEFVPSLSFDCSGLVDYLTFLGLEVEDVFEQKLPDQKVIVGKIVEVRPHPNADRLRICMVDTGEGELRQIVCGAPNVEAGMMVPVATIGAVLTAVSGETFTIKPAKIRGEHSSGMICAADELGLSDDHDGVMVLDEACEIGQPLARYLETDTVLDIAVTPNRPDALSHLGVARELADCNEIVYPQAPVIEFTRGGGLIEVQDEESCPYYTATVIKGVTVGPSPRWLARRLEQIGLRPKNNIVDITNYILHSFGQPLHAFDYHQLAGSRIVVRSDAESSFMALNKVEYQLQPGMTVVCDAREPVAIGGVMGGLHSAVTDKTTDILLEAAYFNPASVRKTAKQLQLSSDSSYRFERGVDPCNVKRAAEYAIAMILEIAGGNVDSAEAWGDMPAAQKIVSLRPKRVNAVLGSSITASRMVRLLEKICIKAVSQEAVSDDVDSIAFSVPSFRVDIEQEIDLIEEVARLYGYNNLEPAPVMVSSYPVSRKVPEYFPDYLRSIMIGLNFREVLTNPLIRKAEADCFSSMLVNVLNPISEELEVLRPNLAPSLLKVVGYNMRHGNRELRLFEVAHGFEKQPEAGRGNEGPLSAFLEKELLSMVITGRREPRSWNRQDENVDFYDLRGVVEMLLEKLNLLEKSAFNIYNARTIGIEITSTENGKTSVLKAGTVQQVNREVLDVFGLDQDVYLAELDVTLLERCFESGVIYEPPSKFPVVERDLSFVLPRHIPAQRLIDLAKASDPRVRSVRIFDVFDRGTTQGEPSTRSVALSLELADRSGTMNEEAISAVISKVIDNARSELGAVIRQV</sequence>
<gene>
    <name evidence="1" type="primary">pheT</name>
    <name type="ordered locus">CT0730</name>
</gene>
<keyword id="KW-0030">Aminoacyl-tRNA synthetase</keyword>
<keyword id="KW-0067">ATP-binding</keyword>
<keyword id="KW-0963">Cytoplasm</keyword>
<keyword id="KW-0436">Ligase</keyword>
<keyword id="KW-0460">Magnesium</keyword>
<keyword id="KW-0479">Metal-binding</keyword>
<keyword id="KW-0547">Nucleotide-binding</keyword>
<keyword id="KW-0648">Protein biosynthesis</keyword>
<keyword id="KW-1185">Reference proteome</keyword>
<keyword id="KW-0694">RNA-binding</keyword>
<keyword id="KW-0820">tRNA-binding</keyword>